<name>FLUC_STUS1</name>
<gene>
    <name evidence="1" type="primary">fluC</name>
    <name evidence="1" type="synonym">crcB</name>
    <name type="ordered locus">PST_2290</name>
</gene>
<protein>
    <recommendedName>
        <fullName evidence="1">Fluoride-specific ion channel FluC</fullName>
    </recommendedName>
</protein>
<reference key="1">
    <citation type="journal article" date="2008" name="Proc. Natl. Acad. Sci. U.S.A.">
        <title>Nitrogen fixation island and rhizosphere competence traits in the genome of root-associated Pseudomonas stutzeri A1501.</title>
        <authorList>
            <person name="Yan Y."/>
            <person name="Yang J."/>
            <person name="Dou Y."/>
            <person name="Chen M."/>
            <person name="Ping S."/>
            <person name="Peng J."/>
            <person name="Lu W."/>
            <person name="Zhang W."/>
            <person name="Yao Z."/>
            <person name="Li H."/>
            <person name="Liu W."/>
            <person name="He S."/>
            <person name="Geng L."/>
            <person name="Zhang X."/>
            <person name="Yang F."/>
            <person name="Yu H."/>
            <person name="Zhan Y."/>
            <person name="Li D."/>
            <person name="Lin Z."/>
            <person name="Wang Y."/>
            <person name="Elmerich C."/>
            <person name="Lin M."/>
            <person name="Jin Q."/>
        </authorList>
    </citation>
    <scope>NUCLEOTIDE SEQUENCE [LARGE SCALE GENOMIC DNA]</scope>
    <source>
        <strain>A1501</strain>
    </source>
</reference>
<keyword id="KW-0997">Cell inner membrane</keyword>
<keyword id="KW-1003">Cell membrane</keyword>
<keyword id="KW-0407">Ion channel</keyword>
<keyword id="KW-0406">Ion transport</keyword>
<keyword id="KW-0472">Membrane</keyword>
<keyword id="KW-0479">Metal-binding</keyword>
<keyword id="KW-1185">Reference proteome</keyword>
<keyword id="KW-0915">Sodium</keyword>
<keyword id="KW-0812">Transmembrane</keyword>
<keyword id="KW-1133">Transmembrane helix</keyword>
<keyword id="KW-0813">Transport</keyword>
<evidence type="ECO:0000255" key="1">
    <source>
        <dbReference type="HAMAP-Rule" id="MF_00454"/>
    </source>
</evidence>
<accession>A4VLU8</accession>
<sequence>MIRMAFAVACGGVIGTLLRFALATWVSAQWPRHFYLATVAVNLLGCLLIGYLYATFLARPDISPELRGALIIGFLGALTTFSSFSLDALRLLESGQLATAFAYVGGSVLGGLLAAWAGLALARL</sequence>
<comment type="function">
    <text evidence="1">Fluoride-specific ion channel. Important for reducing fluoride concentration in the cell, thus reducing its toxicity.</text>
</comment>
<comment type="catalytic activity">
    <reaction evidence="1">
        <text>fluoride(in) = fluoride(out)</text>
        <dbReference type="Rhea" id="RHEA:76159"/>
        <dbReference type="ChEBI" id="CHEBI:17051"/>
    </reaction>
    <physiologicalReaction direction="left-to-right" evidence="1">
        <dbReference type="Rhea" id="RHEA:76160"/>
    </physiologicalReaction>
</comment>
<comment type="activity regulation">
    <text evidence="1">Na(+) is not transported, but it plays an essential structural role and its presence is essential for fluoride channel function.</text>
</comment>
<comment type="subcellular location">
    <subcellularLocation>
        <location evidence="1">Cell inner membrane</location>
        <topology evidence="1">Multi-pass membrane protein</topology>
    </subcellularLocation>
</comment>
<comment type="similarity">
    <text evidence="1">Belongs to the fluoride channel Fluc/FEX (TC 1.A.43) family.</text>
</comment>
<dbReference type="EMBL" id="CP000304">
    <property type="protein sequence ID" value="ABP79949.1"/>
    <property type="molecule type" value="Genomic_DNA"/>
</dbReference>
<dbReference type="RefSeq" id="WP_011913416.1">
    <property type="nucleotide sequence ID" value="NC_009434.1"/>
</dbReference>
<dbReference type="SMR" id="A4VLU8"/>
<dbReference type="KEGG" id="psa:PST_2290"/>
<dbReference type="eggNOG" id="COG0239">
    <property type="taxonomic scope" value="Bacteria"/>
</dbReference>
<dbReference type="HOGENOM" id="CLU_114342_2_3_6"/>
<dbReference type="Proteomes" id="UP000000233">
    <property type="component" value="Chromosome"/>
</dbReference>
<dbReference type="GO" id="GO:0005886">
    <property type="term" value="C:plasma membrane"/>
    <property type="evidence" value="ECO:0007669"/>
    <property type="project" value="UniProtKB-SubCell"/>
</dbReference>
<dbReference type="GO" id="GO:0062054">
    <property type="term" value="F:fluoride channel activity"/>
    <property type="evidence" value="ECO:0007669"/>
    <property type="project" value="UniProtKB-UniRule"/>
</dbReference>
<dbReference type="GO" id="GO:0046872">
    <property type="term" value="F:metal ion binding"/>
    <property type="evidence" value="ECO:0007669"/>
    <property type="project" value="UniProtKB-KW"/>
</dbReference>
<dbReference type="GO" id="GO:0140114">
    <property type="term" value="P:cellular detoxification of fluoride"/>
    <property type="evidence" value="ECO:0007669"/>
    <property type="project" value="UniProtKB-UniRule"/>
</dbReference>
<dbReference type="HAMAP" id="MF_00454">
    <property type="entry name" value="FluC"/>
    <property type="match status" value="1"/>
</dbReference>
<dbReference type="InterPro" id="IPR003691">
    <property type="entry name" value="FluC"/>
</dbReference>
<dbReference type="NCBIfam" id="NF010830">
    <property type="entry name" value="PRK14234.1"/>
    <property type="match status" value="1"/>
</dbReference>
<dbReference type="PANTHER" id="PTHR28259">
    <property type="entry name" value="FLUORIDE EXPORT PROTEIN 1-RELATED"/>
    <property type="match status" value="1"/>
</dbReference>
<dbReference type="PANTHER" id="PTHR28259:SF1">
    <property type="entry name" value="FLUORIDE EXPORT PROTEIN 1-RELATED"/>
    <property type="match status" value="1"/>
</dbReference>
<dbReference type="Pfam" id="PF02537">
    <property type="entry name" value="CRCB"/>
    <property type="match status" value="1"/>
</dbReference>
<proteinExistence type="inferred from homology"/>
<feature type="chain" id="PRO_1000026409" description="Fluoride-specific ion channel FluC">
    <location>
        <begin position="1"/>
        <end position="124"/>
    </location>
</feature>
<feature type="transmembrane region" description="Helical" evidence="1">
    <location>
        <begin position="6"/>
        <end position="26"/>
    </location>
</feature>
<feature type="transmembrane region" description="Helical" evidence="1">
    <location>
        <begin position="34"/>
        <end position="54"/>
    </location>
</feature>
<feature type="transmembrane region" description="Helical" evidence="1">
    <location>
        <begin position="69"/>
        <end position="89"/>
    </location>
</feature>
<feature type="transmembrane region" description="Helical" evidence="1">
    <location>
        <begin position="101"/>
        <end position="121"/>
    </location>
</feature>
<feature type="binding site" evidence="1">
    <location>
        <position position="76"/>
    </location>
    <ligand>
        <name>Na(+)</name>
        <dbReference type="ChEBI" id="CHEBI:29101"/>
        <note>structural</note>
    </ligand>
</feature>
<feature type="binding site" evidence="1">
    <location>
        <position position="79"/>
    </location>
    <ligand>
        <name>Na(+)</name>
        <dbReference type="ChEBI" id="CHEBI:29101"/>
        <note>structural</note>
    </ligand>
</feature>
<organism>
    <name type="scientific">Stutzerimonas stutzeri (strain A1501)</name>
    <name type="common">Pseudomonas stutzeri</name>
    <dbReference type="NCBI Taxonomy" id="379731"/>
    <lineage>
        <taxon>Bacteria</taxon>
        <taxon>Pseudomonadati</taxon>
        <taxon>Pseudomonadota</taxon>
        <taxon>Gammaproteobacteria</taxon>
        <taxon>Pseudomonadales</taxon>
        <taxon>Pseudomonadaceae</taxon>
        <taxon>Stutzerimonas</taxon>
    </lineage>
</organism>